<protein>
    <recommendedName>
        <fullName evidence="4">Nucleoporin NUP84</fullName>
    </recommendedName>
    <alternativeName>
        <fullName>Nuclear pore protein NUP84</fullName>
    </alternativeName>
</protein>
<name>NUP84_CHATD</name>
<feature type="chain" id="PRO_0000433188" description="Nucleoporin NUP84">
    <location>
        <begin position="1"/>
        <end position="948"/>
    </location>
</feature>
<feature type="region of interest" description="Disordered" evidence="3">
    <location>
        <begin position="1"/>
        <end position="39"/>
    </location>
</feature>
<feature type="coiled-coil region" evidence="2">
    <location>
        <begin position="118"/>
        <end position="148"/>
    </location>
</feature>
<feature type="compositionally biased region" description="Polar residues" evidence="3">
    <location>
        <begin position="11"/>
        <end position="21"/>
    </location>
</feature>
<feature type="sequence conflict" description="In Ref. 1; AEL00685." evidence="5" ref="1">
    <location>
        <begin position="940"/>
        <end position="948"/>
    </location>
</feature>
<organism>
    <name type="scientific">Chaetomium thermophilum (strain DSM 1495 / CBS 144.50 / IMI 039719)</name>
    <name type="common">Thermochaetoides thermophila</name>
    <dbReference type="NCBI Taxonomy" id="759272"/>
    <lineage>
        <taxon>Eukaryota</taxon>
        <taxon>Fungi</taxon>
        <taxon>Dikarya</taxon>
        <taxon>Ascomycota</taxon>
        <taxon>Pezizomycotina</taxon>
        <taxon>Sordariomycetes</taxon>
        <taxon>Sordariomycetidae</taxon>
        <taxon>Sordariales</taxon>
        <taxon>Chaetomiaceae</taxon>
        <taxon>Thermochaetoides</taxon>
    </lineage>
</organism>
<proteinExistence type="inferred from homology"/>
<sequence>MSPAFNIPDSIESSRGSSQSPHHGLNPEEMADIEATSQDNAVRVGEEIDYFAAQLDRYDADQTGSPPERRSRAFQLVDSYYTFTRKRLDRLRERQARQRSAQRGSWQRAGSIEMDLDDADEENDDILDEELQQLEDEVQIWDLLRRILPLRYHDATQNQKKEHDGSTKSRRQWWNEFMVSDSVARERKVVLEWLQNSASYGPPIDEVVSDLQHNAERGDILAHGWLHTRHKIKLQKSVNAYQGVLDPRDAAAAQSHLSSNSLITQLDPDAVTRQARKLEPQDESFERAIWLGCFEMLRRGCSMSEIREWLAVRTELWRAFSIAPLPLSNPDDEEQPDFDPVSLILWRRMCYAIATDGGTSDYDRAVYGLLAGDIPSVEKVCKTWDDVLFAHYNALLRTQFDLFLIKHGGDAAAKAAQQFPSFNAVAYHGDPATATKRLIDSLETGMKTSAEAFRPAKALQAAIVADDLDKFLFHQGLLLSIRANKKEKSKLIPEYPFPHESFSDKKYYDLGDHQGLRILAHVLIIILTLDRLSGVAKDKGPLQARHQAAENSIAAYISYLRLVRLEEMIPLYCSKLHGPRVYSTLSRNLIHIVDIDARLHQLTIMRNLGIDVSEFVKSQPLIYLDDVQDELVSCDAKDQFKILEDGPATLKYGRLVKPDFFGDDADYVDPEDDALIRSMEWLLLVPGLFVETCAYAVRIYKYFLKRTRLRAARAFSRRVRGHEIIRTKFPNLLKDVDENDPAAWFEEFAAAQLPSDLLESCPASQEKLITITRHLWELESLVRALDSIETLTSLAALTREESVPMTREMWQEVSQTVRIAKACMRPVLKEWLLTTYDGRSVEQDFLDIRQAYIPETILAYISCLHFAGTSLSRDNLLECMDLAAIIAEKDSDVAKEFMRCGRMKELVEAFASASKALAIWSGEKKGSQTNSKKLRELGWSRELWSIKS</sequence>
<keyword id="KW-0175">Coiled coil</keyword>
<keyword id="KW-0472">Membrane</keyword>
<keyword id="KW-0509">mRNA transport</keyword>
<keyword id="KW-0906">Nuclear pore complex</keyword>
<keyword id="KW-0539">Nucleus</keyword>
<keyword id="KW-0653">Protein transport</keyword>
<keyword id="KW-1185">Reference proteome</keyword>
<keyword id="KW-0811">Translocation</keyword>
<keyword id="KW-0813">Transport</keyword>
<dbReference type="EMBL" id="GL988046">
    <property type="protein sequence ID" value="EGS17935.1"/>
    <property type="molecule type" value="Genomic_DNA"/>
</dbReference>
<dbReference type="EMBL" id="JF276290">
    <property type="protein sequence ID" value="AEL00685.1"/>
    <property type="molecule type" value="Genomic_DNA"/>
</dbReference>
<dbReference type="RefSeq" id="XP_006696266.1">
    <property type="nucleotide sequence ID" value="XM_006696203.1"/>
</dbReference>
<dbReference type="SMR" id="G0SER9"/>
<dbReference type="DIP" id="DIP-60569N"/>
<dbReference type="IntAct" id="G0SER9">
    <property type="interactions" value="5"/>
</dbReference>
<dbReference type="STRING" id="759272.G0SER9"/>
<dbReference type="TCDB" id="1.I.1.1.2">
    <property type="family name" value="the nuclear pore complex (npc) family"/>
</dbReference>
<dbReference type="GeneID" id="18259986"/>
<dbReference type="KEGG" id="cthr:CTHT_0059480"/>
<dbReference type="eggNOG" id="KOG1964">
    <property type="taxonomic scope" value="Eukaryota"/>
</dbReference>
<dbReference type="HOGENOM" id="CLU_005882_1_0_1"/>
<dbReference type="OMA" id="RYQGFCK"/>
<dbReference type="OrthoDB" id="3098at2759"/>
<dbReference type="Proteomes" id="UP000008066">
    <property type="component" value="Unassembled WGS sequence"/>
</dbReference>
<dbReference type="GO" id="GO:0031965">
    <property type="term" value="C:nuclear membrane"/>
    <property type="evidence" value="ECO:0007669"/>
    <property type="project" value="UniProtKB-SubCell"/>
</dbReference>
<dbReference type="GO" id="GO:0031080">
    <property type="term" value="C:nuclear pore outer ring"/>
    <property type="evidence" value="ECO:0007669"/>
    <property type="project" value="TreeGrafter"/>
</dbReference>
<dbReference type="GO" id="GO:0017056">
    <property type="term" value="F:structural constituent of nuclear pore"/>
    <property type="evidence" value="ECO:0007669"/>
    <property type="project" value="InterPro"/>
</dbReference>
<dbReference type="GO" id="GO:0006406">
    <property type="term" value="P:mRNA export from nucleus"/>
    <property type="evidence" value="ECO:0007669"/>
    <property type="project" value="TreeGrafter"/>
</dbReference>
<dbReference type="GO" id="GO:0000973">
    <property type="term" value="P:post-transcriptional tethering of RNA polymerase II gene DNA at nuclear periphery"/>
    <property type="evidence" value="ECO:0007669"/>
    <property type="project" value="TreeGrafter"/>
</dbReference>
<dbReference type="GO" id="GO:0006606">
    <property type="term" value="P:protein import into nucleus"/>
    <property type="evidence" value="ECO:0007669"/>
    <property type="project" value="TreeGrafter"/>
</dbReference>
<dbReference type="FunFam" id="1.10.3450.20:FF:000003">
    <property type="entry name" value="Nuclear pore complex protein"/>
    <property type="match status" value="1"/>
</dbReference>
<dbReference type="Gene3D" id="1.10.3450.20">
    <property type="match status" value="1"/>
</dbReference>
<dbReference type="Gene3D" id="1.20.190.50">
    <property type="match status" value="1"/>
</dbReference>
<dbReference type="InterPro" id="IPR007252">
    <property type="entry name" value="Nup84/Nup107"/>
</dbReference>
<dbReference type="PANTHER" id="PTHR13003:SF2">
    <property type="entry name" value="NUCLEAR PORE COMPLEX PROTEIN NUP107"/>
    <property type="match status" value="1"/>
</dbReference>
<dbReference type="PANTHER" id="PTHR13003">
    <property type="entry name" value="NUP107-RELATED"/>
    <property type="match status" value="1"/>
</dbReference>
<dbReference type="Pfam" id="PF04121">
    <property type="entry name" value="Nup84_Nup100"/>
    <property type="match status" value="1"/>
</dbReference>
<evidence type="ECO:0000250" key="1">
    <source>
        <dbReference type="UniProtKB" id="P52891"/>
    </source>
</evidence>
<evidence type="ECO:0000255" key="2"/>
<evidence type="ECO:0000256" key="3">
    <source>
        <dbReference type="SAM" id="MobiDB-lite"/>
    </source>
</evidence>
<evidence type="ECO:0000303" key="4">
    <source>
    </source>
</evidence>
<evidence type="ECO:0000305" key="5"/>
<evidence type="ECO:0000305" key="6">
    <source>
    </source>
</evidence>
<reference key="1">
    <citation type="journal article" date="2011" name="Cell">
        <title>Insight into structure and assembly of the nuclear pore complex by utilizing the genome of a eukaryotic thermophile.</title>
        <authorList>
            <person name="Amlacher S."/>
            <person name="Sarges P."/>
            <person name="Flemming D."/>
            <person name="van Noort V."/>
            <person name="Kunze R."/>
            <person name="Devos D.P."/>
            <person name="Arumugam M."/>
            <person name="Bork P."/>
            <person name="Hurt E."/>
        </authorList>
    </citation>
    <scope>NUCLEOTIDE SEQUENCE [LARGE SCALE GENOMIC DNA]</scope>
    <source>
        <strain>DSM 1495 / CBS 144.50 / IMI 039719</strain>
    </source>
</reference>
<accession>G0SER9</accession>
<accession>G0ZGU7</accession>
<gene>
    <name type="primary">NUP84</name>
    <name type="ORF">CTHT_0059480</name>
</gene>
<comment type="function">
    <text evidence="1">Functions as a component of the nuclear pore complex (NPC). NPC components, collectively referred to as nucleoporins (NUPs), can play the role of both NPC structural components and of docking or interaction partners for transiently associated nuclear transport factors. NUP84 is involved in nuclear poly(A)+ RNA export, in NPC assembly and distribution, as well as in nuclear envelope organization.</text>
</comment>
<comment type="subunit">
    <text evidence="1 6">Component of the nuclear pore complex (NPC). NPC constitutes the exclusive means of nucleocytoplasmic transport. NPCs allow the passive diffusion of ions and small molecules and the active, nuclear transport receptor-mediated bidirectional transport of macromolecules such as proteins, RNAs, ribonucleoparticles (RNPs), and ribosomal subunits across the nuclear envelope. Due to its 8-fold rotational symmetry, all subunits are present with 8 copies or multiples thereof.</text>
</comment>
<comment type="subcellular location">
    <subcellularLocation>
        <location evidence="1">Nucleus</location>
        <location evidence="1">Nuclear pore complex</location>
    </subcellularLocation>
    <subcellularLocation>
        <location evidence="1">Nucleus membrane</location>
        <topology evidence="1">Peripheral membrane protein</topology>
        <orientation evidence="1">Cytoplasmic side</orientation>
    </subcellularLocation>
    <subcellularLocation>
        <location evidence="1">Nucleus membrane</location>
        <topology evidence="1">Peripheral membrane protein</topology>
        <orientation evidence="1">Nucleoplasmic side</orientation>
    </subcellularLocation>
    <text evidence="1">Symmetric distribution.</text>
</comment>
<comment type="similarity">
    <text evidence="5">Belongs to the Nup84/Nup107 nucleoporin family.</text>
</comment>